<reference key="1">
    <citation type="submission" date="2008-10" db="EMBL/GenBank/DDBJ databases">
        <title>Genome sequence of Bacillus cereus AH187.</title>
        <authorList>
            <person name="Dodson R.J."/>
            <person name="Durkin A.S."/>
            <person name="Rosovitz M.J."/>
            <person name="Rasko D.A."/>
            <person name="Kolsto A.B."/>
            <person name="Okstad O.A."/>
            <person name="Ravel J."/>
            <person name="Sutton G."/>
        </authorList>
    </citation>
    <scope>NUCLEOTIDE SEQUENCE [LARGE SCALE GENOMIC DNA]</scope>
    <source>
        <strain>AH187</strain>
    </source>
</reference>
<proteinExistence type="inferred from homology"/>
<feature type="chain" id="PRO_1000188671" description="UPF0637 protein BCAH187_A4079">
    <location>
        <begin position="1"/>
        <end position="208"/>
    </location>
</feature>
<gene>
    <name type="ordered locus">BCAH187_A4079</name>
</gene>
<dbReference type="EMBL" id="CP001177">
    <property type="protein sequence ID" value="ACJ77232.1"/>
    <property type="molecule type" value="Genomic_DNA"/>
</dbReference>
<dbReference type="SMR" id="B7HME5"/>
<dbReference type="KEGG" id="bcr:BCAH187_A4079"/>
<dbReference type="HOGENOM" id="CLU_096059_0_0_9"/>
<dbReference type="Proteomes" id="UP000002214">
    <property type="component" value="Chromosome"/>
</dbReference>
<dbReference type="Gene3D" id="3.30.930.20">
    <property type="entry name" value="Protein of unknown function DUF1054"/>
    <property type="match status" value="1"/>
</dbReference>
<dbReference type="HAMAP" id="MF_01851">
    <property type="entry name" value="UPF0637"/>
    <property type="match status" value="1"/>
</dbReference>
<dbReference type="InterPro" id="IPR009403">
    <property type="entry name" value="UPF0637"/>
</dbReference>
<dbReference type="InterPro" id="IPR053707">
    <property type="entry name" value="UPF0637_domain_sf"/>
</dbReference>
<dbReference type="Pfam" id="PF06335">
    <property type="entry name" value="DUF1054"/>
    <property type="match status" value="1"/>
</dbReference>
<dbReference type="PIRSF" id="PIRSF021332">
    <property type="entry name" value="DUF1054"/>
    <property type="match status" value="1"/>
</dbReference>
<dbReference type="SUPFAM" id="SSF142913">
    <property type="entry name" value="YktB/PF0168-like"/>
    <property type="match status" value="1"/>
</dbReference>
<name>Y4079_BACC7</name>
<evidence type="ECO:0000255" key="1">
    <source>
        <dbReference type="HAMAP-Rule" id="MF_01851"/>
    </source>
</evidence>
<accession>B7HME5</accession>
<organism>
    <name type="scientific">Bacillus cereus (strain AH187)</name>
    <dbReference type="NCBI Taxonomy" id="405534"/>
    <lineage>
        <taxon>Bacteria</taxon>
        <taxon>Bacillati</taxon>
        <taxon>Bacillota</taxon>
        <taxon>Bacilli</taxon>
        <taxon>Bacillales</taxon>
        <taxon>Bacillaceae</taxon>
        <taxon>Bacillus</taxon>
        <taxon>Bacillus cereus group</taxon>
    </lineage>
</organism>
<sequence>MTLQTFKSTDFEVFTVDGLEERMSAIKTNIHPKLEALGEQFAAYLSKQTDENFFYHVAKHARRKVNPPNDTWVAFSTNKRGYKMLPHFQIGLWGTHAFIYFGLIYECPQKVETAHAFLEHINDLKTNIPNDFVWSIDHTKPSVKLHKTLETNDLQKMIERLATVKKAELLVGIHISPEEFSAMTNEQFLAKIESTMQSLLPLYALCNR</sequence>
<protein>
    <recommendedName>
        <fullName evidence="1">UPF0637 protein BCAH187_A4079</fullName>
    </recommendedName>
</protein>
<comment type="similarity">
    <text evidence="1">Belongs to the UPF0637 family.</text>
</comment>